<gene>
    <name evidence="1" type="primary">rlmE</name>
    <name evidence="1" type="synonym">ftsJ</name>
    <name evidence="1" type="synonym">rrmJ</name>
    <name type="ordered locus">TPASS_0682</name>
</gene>
<comment type="function">
    <text evidence="1">Specifically methylates the uridine in position 2552 of 23S rRNA at the 2'-O position of the ribose in the fully assembled 50S ribosomal subunit.</text>
</comment>
<comment type="catalytic activity">
    <reaction evidence="1">
        <text>uridine(2552) in 23S rRNA + S-adenosyl-L-methionine = 2'-O-methyluridine(2552) in 23S rRNA + S-adenosyl-L-homocysteine + H(+)</text>
        <dbReference type="Rhea" id="RHEA:42720"/>
        <dbReference type="Rhea" id="RHEA-COMP:10202"/>
        <dbReference type="Rhea" id="RHEA-COMP:10203"/>
        <dbReference type="ChEBI" id="CHEBI:15378"/>
        <dbReference type="ChEBI" id="CHEBI:57856"/>
        <dbReference type="ChEBI" id="CHEBI:59789"/>
        <dbReference type="ChEBI" id="CHEBI:65315"/>
        <dbReference type="ChEBI" id="CHEBI:74478"/>
        <dbReference type="EC" id="2.1.1.166"/>
    </reaction>
</comment>
<comment type="subcellular location">
    <subcellularLocation>
        <location evidence="1">Cytoplasm</location>
    </subcellularLocation>
</comment>
<comment type="similarity">
    <text evidence="1">Belongs to the class I-like SAM-binding methyltransferase superfamily. RNA methyltransferase RlmE family.</text>
</comment>
<sequence length="200" mass="21318">MNVYKRADFWAKKAAAAGYRARSVYKLAALDKKYSLLSRASRVLDLGAAPGSWTQYVLGTAAACTAVCAVDVQPIASDIQDARLQRVQGDLCAADTRARVACNAPFDLILSDAAPRTTGNRTVDTSASACLAAGVCAYVNFLSSDGGLVFKVFQGSEHLAILTHLRAHFGAVCSFKPPASRPRSCELYVVARFFRGTCGK</sequence>
<protein>
    <recommendedName>
        <fullName evidence="1">Ribosomal RNA large subunit methyltransferase E</fullName>
        <ecNumber evidence="1">2.1.1.166</ecNumber>
    </recommendedName>
    <alternativeName>
        <fullName evidence="1">23S rRNA Um2552 methyltransferase</fullName>
    </alternativeName>
    <alternativeName>
        <fullName evidence="1">rRNA (uridine-2'-O-)-methyltransferase</fullName>
    </alternativeName>
</protein>
<reference key="1">
    <citation type="journal article" date="2008" name="BMC Microbiol.">
        <title>Complete genome sequence of Treponema pallidum ssp. pallidum strain SS14 determined with oligonucleotide arrays.</title>
        <authorList>
            <person name="Matejkova P."/>
            <person name="Strouhal M."/>
            <person name="Smajs D."/>
            <person name="Norris S.J."/>
            <person name="Palzkill T."/>
            <person name="Petrosino J.F."/>
            <person name="Sodergren E."/>
            <person name="Norton J.E."/>
            <person name="Singh J."/>
            <person name="Richmond T.A."/>
            <person name="Molla M.N."/>
            <person name="Albert T.J."/>
            <person name="Weinstock G.M."/>
        </authorList>
    </citation>
    <scope>NUCLEOTIDE SEQUENCE [LARGE SCALE GENOMIC DNA]</scope>
    <source>
        <strain>SS14</strain>
    </source>
</reference>
<proteinExistence type="inferred from homology"/>
<organism>
    <name type="scientific">Treponema pallidum subsp. pallidum (strain SS14)</name>
    <dbReference type="NCBI Taxonomy" id="455434"/>
    <lineage>
        <taxon>Bacteria</taxon>
        <taxon>Pseudomonadati</taxon>
        <taxon>Spirochaetota</taxon>
        <taxon>Spirochaetia</taxon>
        <taxon>Spirochaetales</taxon>
        <taxon>Treponemataceae</taxon>
        <taxon>Treponema</taxon>
    </lineage>
</organism>
<name>RLME_TREPS</name>
<dbReference type="EC" id="2.1.1.166" evidence="1"/>
<dbReference type="EMBL" id="CP000805">
    <property type="protein sequence ID" value="ACD71100.1"/>
    <property type="molecule type" value="Genomic_DNA"/>
</dbReference>
<dbReference type="RefSeq" id="WP_010882127.1">
    <property type="nucleotide sequence ID" value="NC_021508.1"/>
</dbReference>
<dbReference type="SMR" id="B2S3S1"/>
<dbReference type="KEGG" id="tpp:TPASS_0682"/>
<dbReference type="PATRIC" id="fig|455434.6.peg.675"/>
<dbReference type="Proteomes" id="UP000001202">
    <property type="component" value="Chromosome"/>
</dbReference>
<dbReference type="GO" id="GO:0005737">
    <property type="term" value="C:cytoplasm"/>
    <property type="evidence" value="ECO:0007669"/>
    <property type="project" value="UniProtKB-SubCell"/>
</dbReference>
<dbReference type="GO" id="GO:0008650">
    <property type="term" value="F:rRNA (uridine-2'-O-)-methyltransferase activity"/>
    <property type="evidence" value="ECO:0007669"/>
    <property type="project" value="UniProtKB-UniRule"/>
</dbReference>
<dbReference type="Gene3D" id="3.40.50.150">
    <property type="entry name" value="Vaccinia Virus protein VP39"/>
    <property type="match status" value="1"/>
</dbReference>
<dbReference type="HAMAP" id="MF_01547">
    <property type="entry name" value="RNA_methyltr_E"/>
    <property type="match status" value="1"/>
</dbReference>
<dbReference type="InterPro" id="IPR050082">
    <property type="entry name" value="RNA_methyltr_RlmE"/>
</dbReference>
<dbReference type="InterPro" id="IPR002877">
    <property type="entry name" value="RNA_MeTrfase_FtsJ_dom"/>
</dbReference>
<dbReference type="InterPro" id="IPR015507">
    <property type="entry name" value="rRNA-MeTfrase_E"/>
</dbReference>
<dbReference type="InterPro" id="IPR029063">
    <property type="entry name" value="SAM-dependent_MTases_sf"/>
</dbReference>
<dbReference type="PANTHER" id="PTHR10920:SF13">
    <property type="entry name" value="PRE-RRNA 2'-O-RIBOSE RNA METHYLTRANSFERASE FTSJ3"/>
    <property type="match status" value="1"/>
</dbReference>
<dbReference type="PANTHER" id="PTHR10920">
    <property type="entry name" value="RIBOSOMAL RNA METHYLTRANSFERASE"/>
    <property type="match status" value="1"/>
</dbReference>
<dbReference type="Pfam" id="PF01728">
    <property type="entry name" value="FtsJ"/>
    <property type="match status" value="1"/>
</dbReference>
<dbReference type="PIRSF" id="PIRSF005461">
    <property type="entry name" value="23S_rRNA_mtase"/>
    <property type="match status" value="1"/>
</dbReference>
<dbReference type="SUPFAM" id="SSF53335">
    <property type="entry name" value="S-adenosyl-L-methionine-dependent methyltransferases"/>
    <property type="match status" value="1"/>
</dbReference>
<feature type="chain" id="PRO_1000195025" description="Ribosomal RNA large subunit methyltransferase E">
    <location>
        <begin position="1"/>
        <end position="200"/>
    </location>
</feature>
<feature type="active site" description="Proton acceptor" evidence="1">
    <location>
        <position position="151"/>
    </location>
</feature>
<feature type="binding site" evidence="1">
    <location>
        <position position="51"/>
    </location>
    <ligand>
        <name>S-adenosyl-L-methionine</name>
        <dbReference type="ChEBI" id="CHEBI:59789"/>
    </ligand>
</feature>
<feature type="binding site" evidence="1">
    <location>
        <position position="53"/>
    </location>
    <ligand>
        <name>S-adenosyl-L-methionine</name>
        <dbReference type="ChEBI" id="CHEBI:59789"/>
    </ligand>
</feature>
<feature type="binding site" evidence="1">
    <location>
        <position position="71"/>
    </location>
    <ligand>
        <name>S-adenosyl-L-methionine</name>
        <dbReference type="ChEBI" id="CHEBI:59789"/>
    </ligand>
</feature>
<feature type="binding site" evidence="1">
    <location>
        <position position="90"/>
    </location>
    <ligand>
        <name>S-adenosyl-L-methionine</name>
        <dbReference type="ChEBI" id="CHEBI:59789"/>
    </ligand>
</feature>
<feature type="binding site" evidence="1">
    <location>
        <position position="112"/>
    </location>
    <ligand>
        <name>S-adenosyl-L-methionine</name>
        <dbReference type="ChEBI" id="CHEBI:59789"/>
    </ligand>
</feature>
<evidence type="ECO:0000255" key="1">
    <source>
        <dbReference type="HAMAP-Rule" id="MF_01547"/>
    </source>
</evidence>
<accession>B2S3S1</accession>
<keyword id="KW-0963">Cytoplasm</keyword>
<keyword id="KW-0489">Methyltransferase</keyword>
<keyword id="KW-0698">rRNA processing</keyword>
<keyword id="KW-0949">S-adenosyl-L-methionine</keyword>
<keyword id="KW-0808">Transferase</keyword>